<feature type="chain" id="PRO_0000428917" description="Lectin-like protein At1g53060">
    <location>
        <begin position="1"/>
        <end position="242"/>
    </location>
</feature>
<feature type="region of interest" description="Legume-lectin like">
    <location>
        <begin position="3"/>
        <end position="237"/>
    </location>
</feature>
<feature type="modified residue" description="Phosphoserine" evidence="1">
    <location>
        <position position="207"/>
    </location>
</feature>
<proteinExistence type="inferred from homology"/>
<name>LECT1_ARATH</name>
<dbReference type="EMBL" id="AC022520">
    <property type="protein sequence ID" value="AAF87862.1"/>
    <property type="molecule type" value="Genomic_DNA"/>
</dbReference>
<dbReference type="EMBL" id="CP002684">
    <property type="protein sequence ID" value="AEE32885.1"/>
    <property type="molecule type" value="Genomic_DNA"/>
</dbReference>
<dbReference type="PIR" id="B96571">
    <property type="entry name" value="B96571"/>
</dbReference>
<dbReference type="RefSeq" id="NP_175714.1">
    <property type="nucleotide sequence ID" value="NM_104185.2"/>
</dbReference>
<dbReference type="SMR" id="Q9LNN1"/>
<dbReference type="BioGRID" id="26965">
    <property type="interactions" value="2"/>
</dbReference>
<dbReference type="STRING" id="3702.Q9LNN1"/>
<dbReference type="PaxDb" id="3702-AT1G53060.1"/>
<dbReference type="EnsemblPlants" id="AT1G53060.1">
    <property type="protein sequence ID" value="AT1G53060.1"/>
    <property type="gene ID" value="AT1G53060"/>
</dbReference>
<dbReference type="GeneID" id="841740"/>
<dbReference type="Gramene" id="AT1G53060.1">
    <property type="protein sequence ID" value="AT1G53060.1"/>
    <property type="gene ID" value="AT1G53060"/>
</dbReference>
<dbReference type="KEGG" id="ath:AT1G53060"/>
<dbReference type="Araport" id="AT1G53060"/>
<dbReference type="TAIR" id="AT1G53060"/>
<dbReference type="eggNOG" id="ENOG502QRZ3">
    <property type="taxonomic scope" value="Eukaryota"/>
</dbReference>
<dbReference type="HOGENOM" id="CLU_000288_62_2_1"/>
<dbReference type="InParanoid" id="Q9LNN1"/>
<dbReference type="OMA" id="SKKAGYW"/>
<dbReference type="PhylomeDB" id="Q9LNN1"/>
<dbReference type="PRO" id="PR:Q9LNN1"/>
<dbReference type="Proteomes" id="UP000006548">
    <property type="component" value="Chromosome 1"/>
</dbReference>
<dbReference type="ExpressionAtlas" id="Q9LNN1">
    <property type="expression patterns" value="baseline and differential"/>
</dbReference>
<dbReference type="GO" id="GO:0030246">
    <property type="term" value="F:carbohydrate binding"/>
    <property type="evidence" value="ECO:0007669"/>
    <property type="project" value="UniProtKB-KW"/>
</dbReference>
<dbReference type="CDD" id="cd06899">
    <property type="entry name" value="lectin_legume_LecRK_Arcelin_ConA"/>
    <property type="match status" value="1"/>
</dbReference>
<dbReference type="Gene3D" id="2.60.120.200">
    <property type="match status" value="1"/>
</dbReference>
<dbReference type="InterPro" id="IPR013320">
    <property type="entry name" value="ConA-like_dom_sf"/>
</dbReference>
<dbReference type="InterPro" id="IPR016363">
    <property type="entry name" value="L-lectin"/>
</dbReference>
<dbReference type="InterPro" id="IPR001220">
    <property type="entry name" value="Legume_lectin_dom"/>
</dbReference>
<dbReference type="InterPro" id="IPR050258">
    <property type="entry name" value="Leguminous_Lectin"/>
</dbReference>
<dbReference type="PANTHER" id="PTHR32401:SF33">
    <property type="entry name" value="(RAPE) HYPOTHETICAL PROTEIN"/>
    <property type="match status" value="1"/>
</dbReference>
<dbReference type="PANTHER" id="PTHR32401">
    <property type="entry name" value="CONCANAVALIN A-LIKE LECTIN FAMILY PROTEIN"/>
    <property type="match status" value="1"/>
</dbReference>
<dbReference type="Pfam" id="PF00139">
    <property type="entry name" value="Lectin_legB"/>
    <property type="match status" value="1"/>
</dbReference>
<dbReference type="PIRSF" id="PIRSF002690">
    <property type="entry name" value="L-type_lectin_plant"/>
    <property type="match status" value="1"/>
</dbReference>
<dbReference type="SUPFAM" id="SSF49899">
    <property type="entry name" value="Concanavalin A-like lectins/glucanases"/>
    <property type="match status" value="1"/>
</dbReference>
<sequence>MTFHGDAEYASEPDGMSKSGAIGLSRDNVPFSHGRAIFINPVPFKPSSTSSSVYSFKTSFYFVISPRPKNPNPGHGLAFIIVPNDRNDSASGLGYLSLVNRFSNGNPKNHLFAVEFDVFKDKSLGDINDNHIGINNNSVNSTVSKKAGYWYQSKIEGKNRWLFKELKLSGNGYRAWIEYENGKVTVTIGRSQEKPKRPLIEARVDLSKVFLEKMYVGFAGSMGRGVERHEILDWSFENSAKD</sequence>
<protein>
    <recommendedName>
        <fullName>Lectin-like protein At1g53060</fullName>
    </recommendedName>
</protein>
<organism>
    <name type="scientific">Arabidopsis thaliana</name>
    <name type="common">Mouse-ear cress</name>
    <dbReference type="NCBI Taxonomy" id="3702"/>
    <lineage>
        <taxon>Eukaryota</taxon>
        <taxon>Viridiplantae</taxon>
        <taxon>Streptophyta</taxon>
        <taxon>Embryophyta</taxon>
        <taxon>Tracheophyta</taxon>
        <taxon>Spermatophyta</taxon>
        <taxon>Magnoliopsida</taxon>
        <taxon>eudicotyledons</taxon>
        <taxon>Gunneridae</taxon>
        <taxon>Pentapetalae</taxon>
        <taxon>rosids</taxon>
        <taxon>malvids</taxon>
        <taxon>Brassicales</taxon>
        <taxon>Brassicaceae</taxon>
        <taxon>Camelineae</taxon>
        <taxon>Arabidopsis</taxon>
    </lineage>
</organism>
<accession>Q9LNN1</accession>
<comment type="similarity">
    <text evidence="2">Belongs to the leguminous lectin family.</text>
</comment>
<reference key="1">
    <citation type="journal article" date="2000" name="Nature">
        <title>Sequence and analysis of chromosome 1 of the plant Arabidopsis thaliana.</title>
        <authorList>
            <person name="Theologis A."/>
            <person name="Ecker J.R."/>
            <person name="Palm C.J."/>
            <person name="Federspiel N.A."/>
            <person name="Kaul S."/>
            <person name="White O."/>
            <person name="Alonso J."/>
            <person name="Altafi H."/>
            <person name="Araujo R."/>
            <person name="Bowman C.L."/>
            <person name="Brooks S.Y."/>
            <person name="Buehler E."/>
            <person name="Chan A."/>
            <person name="Chao Q."/>
            <person name="Chen H."/>
            <person name="Cheuk R.F."/>
            <person name="Chin C.W."/>
            <person name="Chung M.K."/>
            <person name="Conn L."/>
            <person name="Conway A.B."/>
            <person name="Conway A.R."/>
            <person name="Creasy T.H."/>
            <person name="Dewar K."/>
            <person name="Dunn P."/>
            <person name="Etgu P."/>
            <person name="Feldblyum T.V."/>
            <person name="Feng J.-D."/>
            <person name="Fong B."/>
            <person name="Fujii C.Y."/>
            <person name="Gill J.E."/>
            <person name="Goldsmith A.D."/>
            <person name="Haas B."/>
            <person name="Hansen N.F."/>
            <person name="Hughes B."/>
            <person name="Huizar L."/>
            <person name="Hunter J.L."/>
            <person name="Jenkins J."/>
            <person name="Johnson-Hopson C."/>
            <person name="Khan S."/>
            <person name="Khaykin E."/>
            <person name="Kim C.J."/>
            <person name="Koo H.L."/>
            <person name="Kremenetskaia I."/>
            <person name="Kurtz D.B."/>
            <person name="Kwan A."/>
            <person name="Lam B."/>
            <person name="Langin-Hooper S."/>
            <person name="Lee A."/>
            <person name="Lee J.M."/>
            <person name="Lenz C.A."/>
            <person name="Li J.H."/>
            <person name="Li Y.-P."/>
            <person name="Lin X."/>
            <person name="Liu S.X."/>
            <person name="Liu Z.A."/>
            <person name="Luros J.S."/>
            <person name="Maiti R."/>
            <person name="Marziali A."/>
            <person name="Militscher J."/>
            <person name="Miranda M."/>
            <person name="Nguyen M."/>
            <person name="Nierman W.C."/>
            <person name="Osborne B.I."/>
            <person name="Pai G."/>
            <person name="Peterson J."/>
            <person name="Pham P.K."/>
            <person name="Rizzo M."/>
            <person name="Rooney T."/>
            <person name="Rowley D."/>
            <person name="Sakano H."/>
            <person name="Salzberg S.L."/>
            <person name="Schwartz J.R."/>
            <person name="Shinn P."/>
            <person name="Southwick A.M."/>
            <person name="Sun H."/>
            <person name="Tallon L.J."/>
            <person name="Tambunga G."/>
            <person name="Toriumi M.J."/>
            <person name="Town C.D."/>
            <person name="Utterback T."/>
            <person name="Van Aken S."/>
            <person name="Vaysberg M."/>
            <person name="Vysotskaia V.S."/>
            <person name="Walker M."/>
            <person name="Wu D."/>
            <person name="Yu G."/>
            <person name="Fraser C.M."/>
            <person name="Venter J.C."/>
            <person name="Davis R.W."/>
        </authorList>
    </citation>
    <scope>NUCLEOTIDE SEQUENCE [LARGE SCALE GENOMIC DNA]</scope>
    <source>
        <strain>cv. Columbia</strain>
    </source>
</reference>
<reference key="2">
    <citation type="journal article" date="2017" name="Plant J.">
        <title>Araport11: a complete reannotation of the Arabidopsis thaliana reference genome.</title>
        <authorList>
            <person name="Cheng C.Y."/>
            <person name="Krishnakumar V."/>
            <person name="Chan A.P."/>
            <person name="Thibaud-Nissen F."/>
            <person name="Schobel S."/>
            <person name="Town C.D."/>
        </authorList>
    </citation>
    <scope>GENOME REANNOTATION</scope>
    <source>
        <strain>cv. Columbia</strain>
    </source>
</reference>
<gene>
    <name type="ordered locus">At1g53060</name>
    <name type="ORF">F8L10.8</name>
</gene>
<keyword id="KW-0430">Lectin</keyword>
<keyword id="KW-0597">Phosphoprotein</keyword>
<keyword id="KW-1185">Reference proteome</keyword>
<evidence type="ECO:0000250" key="1">
    <source>
        <dbReference type="UniProtKB" id="Q9LZF5"/>
    </source>
</evidence>
<evidence type="ECO:0000305" key="2"/>